<keyword id="KW-0002">3D-structure</keyword>
<keyword id="KW-0007">Acetylation</keyword>
<keyword id="KW-0025">Alternative splicing</keyword>
<keyword id="KW-1017">Isopeptide bond</keyword>
<keyword id="KW-0472">Membrane</keyword>
<keyword id="KW-0509">mRNA transport</keyword>
<keyword id="KW-0906">Nuclear pore complex</keyword>
<keyword id="KW-0539">Nucleus</keyword>
<keyword id="KW-0597">Phosphoprotein</keyword>
<keyword id="KW-0653">Protein transport</keyword>
<keyword id="KW-1267">Proteomics identification</keyword>
<keyword id="KW-1185">Reference proteome</keyword>
<keyword id="KW-0677">Repeat</keyword>
<keyword id="KW-0811">Translocation</keyword>
<keyword id="KW-0813">Transport</keyword>
<keyword id="KW-0832">Ubl conjugation</keyword>
<gene>
    <name type="primary">NUP50</name>
    <name type="synonym">NPAP60L</name>
    <name type="ORF">PRO1146</name>
</gene>
<comment type="function">
    <text evidence="3 7">Component of the nuclear pore complex that has a direct role in nuclear protein import (PubMed:20016008). Actively displaces NLSs from importin-alpha, and facilitates disassembly of the importin-alpha:beta-cargo complex and importin recycling (PubMed:20016008). Interacts with regulatory proteins of cell cycle progression including CDKN1B (By similarity). This interaction is required for correct intracellular transport and degradation of CDKN1B (By similarity).</text>
</comment>
<comment type="subunit">
    <text evidence="1">Interacts with Importin alpha-2, Importin beta, Importin beta-2, NUP153, Ran binding protein 7, CDKN1B and itself (By similarity). Does not interact with TPR.</text>
</comment>
<comment type="interaction">
    <interactant intactId="EBI-2371082">
        <id>Q9UKX7</id>
    </interactant>
    <interactant intactId="EBI-1566217">
        <id>O43303</id>
        <label>CCP110</label>
    </interactant>
    <organismsDiffer>false</organismsDiffer>
    <experiments>4</experiments>
</comment>
<comment type="interaction">
    <interactant intactId="EBI-2371082">
        <id>Q9UKX7</id>
    </interactant>
    <interactant intactId="EBI-2339778">
        <id>Q8TEP8</id>
        <label>CEP192</label>
    </interactant>
    <organismsDiffer>false</organismsDiffer>
    <experiments>4</experiments>
</comment>
<comment type="interaction">
    <interactant intactId="EBI-2371082">
        <id>Q9UKX7</id>
    </interactant>
    <interactant intactId="EBI-751001">
        <id>Q14145</id>
        <label>KEAP1</label>
    </interactant>
    <organismsDiffer>false</organismsDiffer>
    <experiments>3</experiments>
</comment>
<comment type="interaction">
    <interactant intactId="EBI-2371082">
        <id>Q9UKX7</id>
    </interactant>
    <interactant intactId="EBI-358383">
        <id>P52294</id>
        <label>KPNA1</label>
    </interactant>
    <organismsDiffer>false</organismsDiffer>
    <experiments>11</experiments>
</comment>
<comment type="interaction">
    <interactant intactId="EBI-2371082">
        <id>Q9UKX7</id>
    </interactant>
    <interactant intactId="EBI-349938">
        <id>P52292</id>
        <label>KPNA2</label>
    </interactant>
    <organismsDiffer>false</organismsDiffer>
    <experiments>13</experiments>
</comment>
<comment type="interaction">
    <interactant intactId="EBI-2371082">
        <id>Q9UKX7</id>
    </interactant>
    <interactant intactId="EBI-10323362">
        <id>Q7Z726</id>
        <label>KPNA2</label>
    </interactant>
    <organismsDiffer>false</organismsDiffer>
    <experiments>3</experiments>
</comment>
<comment type="interaction">
    <interactant intactId="EBI-2371082">
        <id>Q9UKX7</id>
    </interactant>
    <interactant intactId="EBI-358297">
        <id>O00505</id>
        <label>KPNA3</label>
    </interactant>
    <organismsDiffer>false</organismsDiffer>
    <experiments>7</experiments>
</comment>
<comment type="interaction">
    <interactant intactId="EBI-2371082">
        <id>Q9UKX7</id>
    </interactant>
    <interactant intactId="EBI-396343">
        <id>O00629</id>
        <label>KPNA4</label>
    </interactant>
    <organismsDiffer>false</organismsDiffer>
    <experiments>9</experiments>
</comment>
<comment type="interaction">
    <interactant intactId="EBI-2371082">
        <id>Q9UKX7</id>
    </interactant>
    <interactant intactId="EBI-540602">
        <id>O15131</id>
        <label>KPNA5</label>
    </interactant>
    <organismsDiffer>false</organismsDiffer>
    <experiments>11</experiments>
</comment>
<comment type="interaction">
    <interactant intactId="EBI-2371082">
        <id>Q9UKX7</id>
    </interactant>
    <interactant intactId="EBI-359923">
        <id>O60684</id>
        <label>KPNA6</label>
    </interactant>
    <organismsDiffer>false</organismsDiffer>
    <experiments>8</experiments>
</comment>
<comment type="subcellular location">
    <subcellularLocation>
        <location evidence="6">Nucleus</location>
        <location evidence="6">Nuclear pore complex</location>
    </subcellularLocation>
    <subcellularLocation>
        <location evidence="2">Nucleus membrane</location>
        <topology evidence="2">Peripheral membrane protein</topology>
        <orientation evidence="2">Nucleoplasmic side</orientation>
    </subcellularLocation>
    <text evidence="2 6">Localizes to the nucleoplasmic fibrils of the nuclear pore complex (By similarity). Dissociates from the NPC structure early during prophase of mitosis (PubMed:12802065). Associates with the newly formed nuclear membrane during telophase (PubMed:12802065). In the testis, the localization changes during germ cell differentiation from the nuclear surface in spermatocytes to the whole nucleus (interior) in spermatids and back to the nuclear surface in spermatozoa (By similarity).</text>
</comment>
<comment type="alternative products">
    <event type="alternative splicing"/>
    <isoform>
        <id>Q9UKX7-1</id>
        <name>1</name>
        <name>Npap60L</name>
        <sequence type="displayed"/>
    </isoform>
    <isoform>
        <id>Q9UKX7-2</id>
        <name>2</name>
        <name>Npap60S</name>
        <sequence type="described" ref="VSP_040633"/>
    </isoform>
</comment>
<comment type="tissue specificity">
    <text>Ubiquitous. Highest levels in testis, peripheral blood leukocytes and fetal liver.</text>
</comment>
<comment type="domain">
    <text evidence="9">Contains FG repeats. FG repeats are interaction sites for karyopherins (importins, exportins) and form probably an affinity gradient, guiding the transport proteins unidirectionally with their cargo through the NPC. FG repeat regions are highly flexible and lack ordered secondary structure. The overall conservation of FG repeats regarding exact sequence, spacing, and repeat unit length is limited.</text>
</comment>
<comment type="miscellaneous">
    <molecule>Isoform 2</molecule>
    <text evidence="9">Contrarily to Npap60L, Npap60S does not displaces NLSs, but stabilizes their binding to importin-alpha.</text>
</comment>
<evidence type="ECO:0000250" key="1"/>
<evidence type="ECO:0000250" key="2">
    <source>
        <dbReference type="UniProtKB" id="O08587"/>
    </source>
</evidence>
<evidence type="ECO:0000250" key="3">
    <source>
        <dbReference type="UniProtKB" id="Q9JIH2"/>
    </source>
</evidence>
<evidence type="ECO:0000255" key="4">
    <source>
        <dbReference type="PROSITE-ProRule" id="PRU00164"/>
    </source>
</evidence>
<evidence type="ECO:0000256" key="5">
    <source>
        <dbReference type="SAM" id="MobiDB-lite"/>
    </source>
</evidence>
<evidence type="ECO:0000269" key="6">
    <source>
    </source>
</evidence>
<evidence type="ECO:0000269" key="7">
    <source>
    </source>
</evidence>
<evidence type="ECO:0000303" key="8">
    <source>
    </source>
</evidence>
<evidence type="ECO:0000305" key="9"/>
<evidence type="ECO:0007744" key="10">
    <source>
    </source>
</evidence>
<evidence type="ECO:0007744" key="11">
    <source>
    </source>
</evidence>
<evidence type="ECO:0007744" key="12">
    <source>
    </source>
</evidence>
<evidence type="ECO:0007744" key="13">
    <source>
    </source>
</evidence>
<evidence type="ECO:0007744" key="14">
    <source>
    </source>
</evidence>
<evidence type="ECO:0007744" key="15">
    <source>
    </source>
</evidence>
<evidence type="ECO:0007744" key="16">
    <source>
    </source>
</evidence>
<evidence type="ECO:0007744" key="17">
    <source>
    </source>
</evidence>
<evidence type="ECO:0007744" key="18">
    <source>
    </source>
</evidence>
<evidence type="ECO:0007829" key="19">
    <source>
        <dbReference type="PDB" id="3TJ3"/>
    </source>
</evidence>
<evidence type="ECO:0007829" key="20">
    <source>
        <dbReference type="PDB" id="7MO0"/>
    </source>
</evidence>
<protein>
    <recommendedName>
        <fullName>Nuclear pore complex protein Nup50</fullName>
    </recommendedName>
    <alternativeName>
        <fullName>50 kDa nucleoporin</fullName>
    </alternativeName>
    <alternativeName>
        <fullName>Nuclear pore-associated protein 60 kDa-like</fullName>
    </alternativeName>
    <alternativeName>
        <fullName>Nucleoporin Nup50</fullName>
    </alternativeName>
</protein>
<reference key="1">
    <citation type="journal article" date="1999" name="Cytogenet. Cell Genet.">
        <title>Mapping and complex expression pattern of the human NPAP60L nucleoporin gene.</title>
        <authorList>
            <person name="Trichet V."/>
            <person name="Shkolny D."/>
            <person name="Dunham I."/>
            <person name="Beare D."/>
            <person name="McDermid H.E."/>
        </authorList>
    </citation>
    <scope>NUCLEOTIDE SEQUENCE [MRNA] (ISOFORM 1)</scope>
</reference>
<reference key="2">
    <citation type="submission" date="1998-12" db="EMBL/GenBank/DDBJ databases">
        <title>Functional prediction of the coding sequences of 121 new genes deduced by analysis of cDNA clones from human fetal liver.</title>
        <authorList>
            <person name="Zhang C."/>
            <person name="Yu Y."/>
            <person name="Zhang S."/>
            <person name="Wei H."/>
            <person name="Zhou G."/>
            <person name="Ouyang S."/>
            <person name="Luo L."/>
            <person name="Bi J."/>
            <person name="Liu M."/>
            <person name="He F."/>
        </authorList>
    </citation>
    <scope>NUCLEOTIDE SEQUENCE [LARGE SCALE MRNA] (ISOFORM 1)</scope>
    <source>
        <tissue>Fetal liver</tissue>
    </source>
</reference>
<reference key="3">
    <citation type="journal article" date="2004" name="Genome Biol.">
        <title>A genome annotation-driven approach to cloning the human ORFeome.</title>
        <authorList>
            <person name="Collins J.E."/>
            <person name="Wright C.L."/>
            <person name="Edwards C.A."/>
            <person name="Davis M.P."/>
            <person name="Grinham J.A."/>
            <person name="Cole C.G."/>
            <person name="Goward M.E."/>
            <person name="Aguado B."/>
            <person name="Mallya M."/>
            <person name="Mokrab Y."/>
            <person name="Huckle E.J."/>
            <person name="Beare D.M."/>
            <person name="Dunham I."/>
        </authorList>
    </citation>
    <scope>NUCLEOTIDE SEQUENCE [LARGE SCALE MRNA] (ISOFORM 1)</scope>
</reference>
<reference key="4">
    <citation type="journal article" date="2004" name="Nat. Genet.">
        <title>Complete sequencing and characterization of 21,243 full-length human cDNAs.</title>
        <authorList>
            <person name="Ota T."/>
            <person name="Suzuki Y."/>
            <person name="Nishikawa T."/>
            <person name="Otsuki T."/>
            <person name="Sugiyama T."/>
            <person name="Irie R."/>
            <person name="Wakamatsu A."/>
            <person name="Hayashi K."/>
            <person name="Sato H."/>
            <person name="Nagai K."/>
            <person name="Kimura K."/>
            <person name="Makita H."/>
            <person name="Sekine M."/>
            <person name="Obayashi M."/>
            <person name="Nishi T."/>
            <person name="Shibahara T."/>
            <person name="Tanaka T."/>
            <person name="Ishii S."/>
            <person name="Yamamoto J."/>
            <person name="Saito K."/>
            <person name="Kawai Y."/>
            <person name="Isono Y."/>
            <person name="Nakamura Y."/>
            <person name="Nagahari K."/>
            <person name="Murakami K."/>
            <person name="Yasuda T."/>
            <person name="Iwayanagi T."/>
            <person name="Wagatsuma M."/>
            <person name="Shiratori A."/>
            <person name="Sudo H."/>
            <person name="Hosoiri T."/>
            <person name="Kaku Y."/>
            <person name="Kodaira H."/>
            <person name="Kondo H."/>
            <person name="Sugawara M."/>
            <person name="Takahashi M."/>
            <person name="Kanda K."/>
            <person name="Yokoi T."/>
            <person name="Furuya T."/>
            <person name="Kikkawa E."/>
            <person name="Omura Y."/>
            <person name="Abe K."/>
            <person name="Kamihara K."/>
            <person name="Katsuta N."/>
            <person name="Sato K."/>
            <person name="Tanikawa M."/>
            <person name="Yamazaki M."/>
            <person name="Ninomiya K."/>
            <person name="Ishibashi T."/>
            <person name="Yamashita H."/>
            <person name="Murakawa K."/>
            <person name="Fujimori K."/>
            <person name="Tanai H."/>
            <person name="Kimata M."/>
            <person name="Watanabe M."/>
            <person name="Hiraoka S."/>
            <person name="Chiba Y."/>
            <person name="Ishida S."/>
            <person name="Ono Y."/>
            <person name="Takiguchi S."/>
            <person name="Watanabe S."/>
            <person name="Yosida M."/>
            <person name="Hotuta T."/>
            <person name="Kusano J."/>
            <person name="Kanehori K."/>
            <person name="Takahashi-Fujii A."/>
            <person name="Hara H."/>
            <person name="Tanase T.-O."/>
            <person name="Nomura Y."/>
            <person name="Togiya S."/>
            <person name="Komai F."/>
            <person name="Hara R."/>
            <person name="Takeuchi K."/>
            <person name="Arita M."/>
            <person name="Imose N."/>
            <person name="Musashino K."/>
            <person name="Yuuki H."/>
            <person name="Oshima A."/>
            <person name="Sasaki N."/>
            <person name="Aotsuka S."/>
            <person name="Yoshikawa Y."/>
            <person name="Matsunawa H."/>
            <person name="Ichihara T."/>
            <person name="Shiohata N."/>
            <person name="Sano S."/>
            <person name="Moriya S."/>
            <person name="Momiyama H."/>
            <person name="Satoh N."/>
            <person name="Takami S."/>
            <person name="Terashima Y."/>
            <person name="Suzuki O."/>
            <person name="Nakagawa S."/>
            <person name="Senoh A."/>
            <person name="Mizoguchi H."/>
            <person name="Goto Y."/>
            <person name="Shimizu F."/>
            <person name="Wakebe H."/>
            <person name="Hishigaki H."/>
            <person name="Watanabe T."/>
            <person name="Sugiyama A."/>
            <person name="Takemoto M."/>
            <person name="Kawakami B."/>
            <person name="Yamazaki M."/>
            <person name="Watanabe K."/>
            <person name="Kumagai A."/>
            <person name="Itakura S."/>
            <person name="Fukuzumi Y."/>
            <person name="Fujimori Y."/>
            <person name="Komiyama M."/>
            <person name="Tashiro H."/>
            <person name="Tanigami A."/>
            <person name="Fujiwara T."/>
            <person name="Ono T."/>
            <person name="Yamada K."/>
            <person name="Fujii Y."/>
            <person name="Ozaki K."/>
            <person name="Hirao M."/>
            <person name="Ohmori Y."/>
            <person name="Kawabata A."/>
            <person name="Hikiji T."/>
            <person name="Kobatake N."/>
            <person name="Inagaki H."/>
            <person name="Ikema Y."/>
            <person name="Okamoto S."/>
            <person name="Okitani R."/>
            <person name="Kawakami T."/>
            <person name="Noguchi S."/>
            <person name="Itoh T."/>
            <person name="Shigeta K."/>
            <person name="Senba T."/>
            <person name="Matsumura K."/>
            <person name="Nakajima Y."/>
            <person name="Mizuno T."/>
            <person name="Morinaga M."/>
            <person name="Sasaki M."/>
            <person name="Togashi T."/>
            <person name="Oyama M."/>
            <person name="Hata H."/>
            <person name="Watanabe M."/>
            <person name="Komatsu T."/>
            <person name="Mizushima-Sugano J."/>
            <person name="Satoh T."/>
            <person name="Shirai Y."/>
            <person name="Takahashi Y."/>
            <person name="Nakagawa K."/>
            <person name="Okumura K."/>
            <person name="Nagase T."/>
            <person name="Nomura N."/>
            <person name="Kikuchi H."/>
            <person name="Masuho Y."/>
            <person name="Yamashita R."/>
            <person name="Nakai K."/>
            <person name="Yada T."/>
            <person name="Nakamura Y."/>
            <person name="Ohara O."/>
            <person name="Isogai T."/>
            <person name="Sugano S."/>
        </authorList>
    </citation>
    <scope>NUCLEOTIDE SEQUENCE [LARGE SCALE MRNA] (ISOFORM 1)</scope>
</reference>
<reference key="5">
    <citation type="journal article" date="1999" name="Nature">
        <title>The DNA sequence of human chromosome 22.</title>
        <authorList>
            <person name="Dunham I."/>
            <person name="Hunt A.R."/>
            <person name="Collins J.E."/>
            <person name="Bruskiewich R."/>
            <person name="Beare D.M."/>
            <person name="Clamp M."/>
            <person name="Smink L.J."/>
            <person name="Ainscough R."/>
            <person name="Almeida J.P."/>
            <person name="Babbage A.K."/>
            <person name="Bagguley C."/>
            <person name="Bailey J."/>
            <person name="Barlow K.F."/>
            <person name="Bates K.N."/>
            <person name="Beasley O.P."/>
            <person name="Bird C.P."/>
            <person name="Blakey S.E."/>
            <person name="Bridgeman A.M."/>
            <person name="Buck D."/>
            <person name="Burgess J."/>
            <person name="Burrill W.D."/>
            <person name="Burton J."/>
            <person name="Carder C."/>
            <person name="Carter N.P."/>
            <person name="Chen Y."/>
            <person name="Clark G."/>
            <person name="Clegg S.M."/>
            <person name="Cobley V.E."/>
            <person name="Cole C.G."/>
            <person name="Collier R.E."/>
            <person name="Connor R."/>
            <person name="Conroy D."/>
            <person name="Corby N.R."/>
            <person name="Coville G.J."/>
            <person name="Cox A.V."/>
            <person name="Davis J."/>
            <person name="Dawson E."/>
            <person name="Dhami P.D."/>
            <person name="Dockree C."/>
            <person name="Dodsworth S.J."/>
            <person name="Durbin R.M."/>
            <person name="Ellington A.G."/>
            <person name="Evans K.L."/>
            <person name="Fey J.M."/>
            <person name="Fleming K."/>
            <person name="French L."/>
            <person name="Garner A.A."/>
            <person name="Gilbert J.G.R."/>
            <person name="Goward M.E."/>
            <person name="Grafham D.V."/>
            <person name="Griffiths M.N.D."/>
            <person name="Hall C."/>
            <person name="Hall R.E."/>
            <person name="Hall-Tamlyn G."/>
            <person name="Heathcott R.W."/>
            <person name="Ho S."/>
            <person name="Holmes S."/>
            <person name="Hunt S.E."/>
            <person name="Jones M.C."/>
            <person name="Kershaw J."/>
            <person name="Kimberley A.M."/>
            <person name="King A."/>
            <person name="Laird G.K."/>
            <person name="Langford C.F."/>
            <person name="Leversha M.A."/>
            <person name="Lloyd C."/>
            <person name="Lloyd D.M."/>
            <person name="Martyn I.D."/>
            <person name="Mashreghi-Mohammadi M."/>
            <person name="Matthews L.H."/>
            <person name="Mccann O.T."/>
            <person name="Mcclay J."/>
            <person name="Mclaren S."/>
            <person name="McMurray A.A."/>
            <person name="Milne S.A."/>
            <person name="Mortimore B.J."/>
            <person name="Odell C.N."/>
            <person name="Pavitt R."/>
            <person name="Pearce A.V."/>
            <person name="Pearson D."/>
            <person name="Phillimore B.J.C.T."/>
            <person name="Phillips S.H."/>
            <person name="Plumb R.W."/>
            <person name="Ramsay H."/>
            <person name="Ramsey Y."/>
            <person name="Rogers L."/>
            <person name="Ross M.T."/>
            <person name="Scott C.E."/>
            <person name="Sehra H.K."/>
            <person name="Skuce C.D."/>
            <person name="Smalley S."/>
            <person name="Smith M.L."/>
            <person name="Soderlund C."/>
            <person name="Spragon L."/>
            <person name="Steward C.A."/>
            <person name="Sulston J.E."/>
            <person name="Swann R.M."/>
            <person name="Vaudin M."/>
            <person name="Wall M."/>
            <person name="Wallis J.M."/>
            <person name="Whiteley M.N."/>
            <person name="Willey D.L."/>
            <person name="Williams L."/>
            <person name="Williams S.A."/>
            <person name="Williamson H."/>
            <person name="Wilmer T.E."/>
            <person name="Wilming L."/>
            <person name="Wright C.L."/>
            <person name="Hubbard T."/>
            <person name="Bentley D.R."/>
            <person name="Beck S."/>
            <person name="Rogers J."/>
            <person name="Shimizu N."/>
            <person name="Minoshima S."/>
            <person name="Kawasaki K."/>
            <person name="Sasaki T."/>
            <person name="Asakawa S."/>
            <person name="Kudoh J."/>
            <person name="Shintani A."/>
            <person name="Shibuya K."/>
            <person name="Yoshizaki Y."/>
            <person name="Aoki N."/>
            <person name="Mitsuyama S."/>
            <person name="Roe B.A."/>
            <person name="Chen F."/>
            <person name="Chu L."/>
            <person name="Crabtree J."/>
            <person name="Deschamps S."/>
            <person name="Do A."/>
            <person name="Do T."/>
            <person name="Dorman A."/>
            <person name="Fang F."/>
            <person name="Fu Y."/>
            <person name="Hu P."/>
            <person name="Hua A."/>
            <person name="Kenton S."/>
            <person name="Lai H."/>
            <person name="Lao H.I."/>
            <person name="Lewis J."/>
            <person name="Lewis S."/>
            <person name="Lin S.-P."/>
            <person name="Loh P."/>
            <person name="Malaj E."/>
            <person name="Nguyen T."/>
            <person name="Pan H."/>
            <person name="Phan S."/>
            <person name="Qi S."/>
            <person name="Qian Y."/>
            <person name="Ray L."/>
            <person name="Ren Q."/>
            <person name="Shaull S."/>
            <person name="Sloan D."/>
            <person name="Song L."/>
            <person name="Wang Q."/>
            <person name="Wang Y."/>
            <person name="Wang Z."/>
            <person name="White J."/>
            <person name="Willingham D."/>
            <person name="Wu H."/>
            <person name="Yao Z."/>
            <person name="Zhan M."/>
            <person name="Zhang G."/>
            <person name="Chissoe S."/>
            <person name="Murray J."/>
            <person name="Miller N."/>
            <person name="Minx P."/>
            <person name="Fulton R."/>
            <person name="Johnson D."/>
            <person name="Bemis G."/>
            <person name="Bentley D."/>
            <person name="Bradshaw H."/>
            <person name="Bourne S."/>
            <person name="Cordes M."/>
            <person name="Du Z."/>
            <person name="Fulton L."/>
            <person name="Goela D."/>
            <person name="Graves T."/>
            <person name="Hawkins J."/>
            <person name="Hinds K."/>
            <person name="Kemp K."/>
            <person name="Latreille P."/>
            <person name="Layman D."/>
            <person name="Ozersky P."/>
            <person name="Rohlfing T."/>
            <person name="Scheet P."/>
            <person name="Walker C."/>
            <person name="Wamsley A."/>
            <person name="Wohldmann P."/>
            <person name="Pepin K."/>
            <person name="Nelson J."/>
            <person name="Korf I."/>
            <person name="Bedell J.A."/>
            <person name="Hillier L.W."/>
            <person name="Mardis E."/>
            <person name="Waterston R."/>
            <person name="Wilson R."/>
            <person name="Emanuel B.S."/>
            <person name="Shaikh T."/>
            <person name="Kurahashi H."/>
            <person name="Saitta S."/>
            <person name="Budarf M.L."/>
            <person name="McDermid H.E."/>
            <person name="Johnson A."/>
            <person name="Wong A.C.C."/>
            <person name="Morrow B.E."/>
            <person name="Edelmann L."/>
            <person name="Kim U.J."/>
            <person name="Shizuya H."/>
            <person name="Simon M.I."/>
            <person name="Dumanski J.P."/>
            <person name="Peyrard M."/>
            <person name="Kedra D."/>
            <person name="Seroussi E."/>
            <person name="Fransson I."/>
            <person name="Tapia I."/>
            <person name="Bruder C.E."/>
            <person name="O'Brien K.P."/>
            <person name="Wilkinson P."/>
            <person name="Bodenteich A."/>
            <person name="Hartman K."/>
            <person name="Hu X."/>
            <person name="Khan A.S."/>
            <person name="Lane L."/>
            <person name="Tilahun Y."/>
            <person name="Wright H."/>
        </authorList>
    </citation>
    <scope>NUCLEOTIDE SEQUENCE [LARGE SCALE GENOMIC DNA]</scope>
</reference>
<reference key="6">
    <citation type="submission" date="2005-07" db="EMBL/GenBank/DDBJ databases">
        <authorList>
            <person name="Mural R.J."/>
            <person name="Istrail S."/>
            <person name="Sutton G.G."/>
            <person name="Florea L."/>
            <person name="Halpern A.L."/>
            <person name="Mobarry C.M."/>
            <person name="Lippert R."/>
            <person name="Walenz B."/>
            <person name="Shatkay H."/>
            <person name="Dew I."/>
            <person name="Miller J.R."/>
            <person name="Flanigan M.J."/>
            <person name="Edwards N.J."/>
            <person name="Bolanos R."/>
            <person name="Fasulo D."/>
            <person name="Halldorsson B.V."/>
            <person name="Hannenhalli S."/>
            <person name="Turner R."/>
            <person name="Yooseph S."/>
            <person name="Lu F."/>
            <person name="Nusskern D.R."/>
            <person name="Shue B.C."/>
            <person name="Zheng X.H."/>
            <person name="Zhong F."/>
            <person name="Delcher A.L."/>
            <person name="Huson D.H."/>
            <person name="Kravitz S.A."/>
            <person name="Mouchard L."/>
            <person name="Reinert K."/>
            <person name="Remington K.A."/>
            <person name="Clark A.G."/>
            <person name="Waterman M.S."/>
            <person name="Eichler E.E."/>
            <person name="Adams M.D."/>
            <person name="Hunkapiller M.W."/>
            <person name="Myers E.W."/>
            <person name="Venter J.C."/>
        </authorList>
    </citation>
    <scope>NUCLEOTIDE SEQUENCE [LARGE SCALE GENOMIC DNA]</scope>
</reference>
<reference key="7">
    <citation type="journal article" date="2004" name="Genome Res.">
        <title>The status, quality, and expansion of the NIH full-length cDNA project: the Mammalian Gene Collection (MGC).</title>
        <authorList>
            <consortium name="The MGC Project Team"/>
        </authorList>
    </citation>
    <scope>NUCLEOTIDE SEQUENCE [LARGE SCALE MRNA] (ISOFORMS 1 AND 2)</scope>
</reference>
<reference key="8">
    <citation type="submission" date="2000-07" db="EMBL/GenBank/DDBJ databases">
        <authorList>
            <consortium name="The European IMAGE consortium"/>
        </authorList>
    </citation>
    <scope>NUCLEOTIDE SEQUENCE [LARGE SCALE MRNA] OF 1-179 (ISOFORM 1)</scope>
</reference>
<reference key="9">
    <citation type="journal article" date="2003" name="Mol. Biol. Cell">
        <title>Direct interaction with nup153 mediates binding of Tpr to the periphery of the nuclear pore complex.</title>
        <authorList>
            <person name="Hase M.E."/>
            <person name="Cordes V.C."/>
        </authorList>
    </citation>
    <scope>LACK OF INTERACTION WITH TPR</scope>
    <scope>SUBCELLULAR LOCATION</scope>
</reference>
<reference key="10">
    <citation type="journal article" date="2006" name="Nat. Biotechnol.">
        <title>A probability-based approach for high-throughput protein phosphorylation analysis and site localization.</title>
        <authorList>
            <person name="Beausoleil S.A."/>
            <person name="Villen J."/>
            <person name="Gerber S.A."/>
            <person name="Rush J."/>
            <person name="Gygi S.P."/>
        </authorList>
    </citation>
    <scope>PHOSPHORYLATION [LARGE SCALE ANALYSIS] AT SER-221</scope>
    <scope>IDENTIFICATION BY MASS SPECTROMETRY [LARGE SCALE ANALYSIS]</scope>
    <source>
        <tissue>Cervix carcinoma</tissue>
    </source>
</reference>
<reference key="11">
    <citation type="journal article" date="2008" name="Proc. Natl. Acad. Sci. U.S.A.">
        <title>A quantitative atlas of mitotic phosphorylation.</title>
        <authorList>
            <person name="Dephoure N."/>
            <person name="Zhou C."/>
            <person name="Villen J."/>
            <person name="Beausoleil S.A."/>
            <person name="Bakalarski C.E."/>
            <person name="Elledge S.J."/>
            <person name="Gygi S.P."/>
        </authorList>
    </citation>
    <scope>PHOSPHORYLATION [LARGE SCALE ANALYSIS] AT SER-221</scope>
    <scope>IDENTIFICATION BY MASS SPECTROMETRY [LARGE SCALE ANALYSIS]</scope>
    <source>
        <tissue>Cervix carcinoma</tissue>
    </source>
</reference>
<reference key="12">
    <citation type="journal article" date="2009" name="Anal. Chem.">
        <title>Lys-N and trypsin cover complementary parts of the phosphoproteome in a refined SCX-based approach.</title>
        <authorList>
            <person name="Gauci S."/>
            <person name="Helbig A.O."/>
            <person name="Slijper M."/>
            <person name="Krijgsveld J."/>
            <person name="Heck A.J."/>
            <person name="Mohammed S."/>
        </authorList>
    </citation>
    <scope>IDENTIFICATION BY MASS SPECTROMETRY [LARGE SCALE ANALYSIS]</scope>
</reference>
<reference key="13">
    <citation type="journal article" date="2009" name="Sci. Signal.">
        <title>Quantitative phosphoproteomic analysis of T cell receptor signaling reveals system-wide modulation of protein-protein interactions.</title>
        <authorList>
            <person name="Mayya V."/>
            <person name="Lundgren D.H."/>
            <person name="Hwang S.-I."/>
            <person name="Rezaul K."/>
            <person name="Wu L."/>
            <person name="Eng J.K."/>
            <person name="Rodionov V."/>
            <person name="Han D.K."/>
        </authorList>
    </citation>
    <scope>PHOSPHORYLATION [LARGE SCALE ANALYSIS] AT SER-221</scope>
    <scope>IDENTIFICATION BY MASS SPECTROMETRY [LARGE SCALE ANALYSIS]</scope>
    <source>
        <tissue>Leukemic T-cell</tissue>
    </source>
</reference>
<reference key="14">
    <citation type="journal article" date="2009" name="Science">
        <title>Lysine acetylation targets protein complexes and co-regulates major cellular functions.</title>
        <authorList>
            <person name="Choudhary C."/>
            <person name="Kumar C."/>
            <person name="Gnad F."/>
            <person name="Nielsen M.L."/>
            <person name="Rehman M."/>
            <person name="Walther T.C."/>
            <person name="Olsen J.V."/>
            <person name="Mann M."/>
        </authorList>
    </citation>
    <scope>ACETYLATION [LARGE SCALE ANALYSIS] AT LYS-83</scope>
    <scope>IDENTIFICATION BY MASS SPECTROMETRY [LARGE SCALE ANALYSIS]</scope>
</reference>
<reference key="15">
    <citation type="journal article" date="2010" name="Mol. Biol. Cell">
        <title>Two isoforms of Npap60 (Nup50) differentially regulate nuclear protein import.</title>
        <authorList>
            <person name="Ogawa Y."/>
            <person name="Miyamoto Y."/>
            <person name="Asally M."/>
            <person name="Oka M."/>
            <person name="Yasuda Y."/>
            <person name="Yoneda Y."/>
        </authorList>
    </citation>
    <scope>FUNCTION</scope>
    <scope>ALTERNATIVE SPLICING</scope>
</reference>
<reference key="16">
    <citation type="journal article" date="2010" name="Sci. Signal.">
        <title>Quantitative phosphoproteomics reveals widespread full phosphorylation site occupancy during mitosis.</title>
        <authorList>
            <person name="Olsen J.V."/>
            <person name="Vermeulen M."/>
            <person name="Santamaria A."/>
            <person name="Kumar C."/>
            <person name="Miller M.L."/>
            <person name="Jensen L.J."/>
            <person name="Gnad F."/>
            <person name="Cox J."/>
            <person name="Jensen T.S."/>
            <person name="Nigg E.A."/>
            <person name="Brunak S."/>
            <person name="Mann M."/>
        </authorList>
    </citation>
    <scope>PHOSPHORYLATION [LARGE SCALE ANALYSIS] AT SER-221; THR-246; THR-259 AND SER-296</scope>
    <scope>IDENTIFICATION BY MASS SPECTROMETRY [LARGE SCALE ANALYSIS]</scope>
    <source>
        <tissue>Cervix carcinoma</tissue>
    </source>
</reference>
<reference key="17">
    <citation type="journal article" date="2011" name="BMC Syst. Biol.">
        <title>Initial characterization of the human central proteome.</title>
        <authorList>
            <person name="Burkard T.R."/>
            <person name="Planyavsky M."/>
            <person name="Kaupe I."/>
            <person name="Breitwieser F.P."/>
            <person name="Buerckstuemmer T."/>
            <person name="Bennett K.L."/>
            <person name="Superti-Furga G."/>
            <person name="Colinge J."/>
        </authorList>
    </citation>
    <scope>IDENTIFICATION BY MASS SPECTROMETRY [LARGE SCALE ANALYSIS]</scope>
</reference>
<reference key="18">
    <citation type="journal article" date="2011" name="Sci. Signal.">
        <title>System-wide temporal characterization of the proteome and phosphoproteome of human embryonic stem cell differentiation.</title>
        <authorList>
            <person name="Rigbolt K.T."/>
            <person name="Prokhorova T.A."/>
            <person name="Akimov V."/>
            <person name="Henningsen J."/>
            <person name="Johansen P.T."/>
            <person name="Kratchmarova I."/>
            <person name="Kassem M."/>
            <person name="Mann M."/>
            <person name="Olsen J.V."/>
            <person name="Blagoev B."/>
        </authorList>
    </citation>
    <scope>PHOSPHORYLATION [LARGE SCALE ANALYSIS] AT SER-221</scope>
    <scope>IDENTIFICATION BY MASS SPECTROMETRY [LARGE SCALE ANALYSIS]</scope>
</reference>
<reference key="19">
    <citation type="journal article" date="2012" name="Proc. Natl. Acad. Sci. U.S.A.">
        <title>N-terminal acetylome analyses and functional insights of the N-terminal acetyltransferase NatB.</title>
        <authorList>
            <person name="Van Damme P."/>
            <person name="Lasa M."/>
            <person name="Polevoda B."/>
            <person name="Gazquez C."/>
            <person name="Elosegui-Artola A."/>
            <person name="Kim D.S."/>
            <person name="De Juan-Pardo E."/>
            <person name="Demeyer K."/>
            <person name="Hole K."/>
            <person name="Larrea E."/>
            <person name="Timmerman E."/>
            <person name="Prieto J."/>
            <person name="Arnesen T."/>
            <person name="Sherman F."/>
            <person name="Gevaert K."/>
            <person name="Aldabe R."/>
        </authorList>
    </citation>
    <scope>ACETYLATION [LARGE SCALE ANALYSIS] AT ALA-2 (ISOFORM 2)</scope>
    <scope>CLEAVAGE OF INITIATOR METHIONINE [LARGE SCALE ANALYSIS] (ISOFORM 2)</scope>
    <scope>IDENTIFICATION BY MASS SPECTROMETRY [LARGE SCALE ANALYSIS]</scope>
</reference>
<reference key="20">
    <citation type="journal article" date="2013" name="J. Proteome Res.">
        <title>Toward a comprehensive characterization of a human cancer cell phosphoproteome.</title>
        <authorList>
            <person name="Zhou H."/>
            <person name="Di Palma S."/>
            <person name="Preisinger C."/>
            <person name="Peng M."/>
            <person name="Polat A.N."/>
            <person name="Heck A.J."/>
            <person name="Mohammed S."/>
        </authorList>
    </citation>
    <scope>PHOSPHORYLATION [LARGE SCALE ANALYSIS] AT SER-52; SER-208; SER-221 AND SER-270</scope>
    <scope>IDENTIFICATION BY MASS SPECTROMETRY [LARGE SCALE ANALYSIS]</scope>
    <source>
        <tissue>Cervix carcinoma</tissue>
        <tissue>Erythroleukemia</tissue>
    </source>
</reference>
<reference key="21">
    <citation type="journal article" date="2014" name="J. Proteomics">
        <title>An enzyme assisted RP-RPLC approach for in-depth analysis of human liver phosphoproteome.</title>
        <authorList>
            <person name="Bian Y."/>
            <person name="Song C."/>
            <person name="Cheng K."/>
            <person name="Dong M."/>
            <person name="Wang F."/>
            <person name="Huang J."/>
            <person name="Sun D."/>
            <person name="Wang L."/>
            <person name="Ye M."/>
            <person name="Zou H."/>
        </authorList>
    </citation>
    <scope>IDENTIFICATION BY MASS SPECTROMETRY [LARGE SCALE ANALYSIS]</scope>
    <source>
        <tissue>Liver</tissue>
    </source>
</reference>
<reference key="22">
    <citation type="journal article" date="2017" name="Nat. Struct. Mol. Biol.">
        <title>Site-specific mapping of the human SUMO proteome reveals co-modification with phosphorylation.</title>
        <authorList>
            <person name="Hendriks I.A."/>
            <person name="Lyon D."/>
            <person name="Young C."/>
            <person name="Jensen L.J."/>
            <person name="Vertegaal A.C."/>
            <person name="Nielsen M.L."/>
        </authorList>
    </citation>
    <scope>SUMOYLATION [LARGE SCALE ANALYSIS] AT LYS-353</scope>
    <scope>IDENTIFICATION BY MASS SPECTROMETRY [LARGE SCALE ANALYSIS]</scope>
</reference>
<reference key="23">
    <citation type="submission" date="2007-08" db="PDB data bank">
        <title>Solution structure of the RANBD1 domain from human nucleoporin 50 kDa.</title>
        <authorList>
            <consortium name="RIKEN structural genomics initiative (RSGI)"/>
        </authorList>
    </citation>
    <scope>STRUCTURE BY NMR OF 351-468</scope>
</reference>
<dbReference type="EMBL" id="AF107840">
    <property type="protein sequence ID" value="AAD53401.1"/>
    <property type="molecule type" value="mRNA"/>
</dbReference>
<dbReference type="EMBL" id="AF116624">
    <property type="protein sequence ID" value="AAF71047.1"/>
    <property type="molecule type" value="mRNA"/>
</dbReference>
<dbReference type="EMBL" id="CR456533">
    <property type="protein sequence ID" value="CAG30419.1"/>
    <property type="molecule type" value="mRNA"/>
</dbReference>
<dbReference type="EMBL" id="AK314454">
    <property type="protein sequence ID" value="BAG37062.1"/>
    <property type="molecule type" value="mRNA"/>
</dbReference>
<dbReference type="EMBL" id="AL008718">
    <property type="status" value="NOT_ANNOTATED_CDS"/>
    <property type="molecule type" value="Genomic_DNA"/>
</dbReference>
<dbReference type="EMBL" id="Z82243">
    <property type="status" value="NOT_ANNOTATED_CDS"/>
    <property type="molecule type" value="Genomic_DNA"/>
</dbReference>
<dbReference type="EMBL" id="CH471138">
    <property type="protein sequence ID" value="EAW73370.1"/>
    <property type="molecule type" value="Genomic_DNA"/>
</dbReference>
<dbReference type="EMBL" id="CH471138">
    <property type="protein sequence ID" value="EAW73372.1"/>
    <property type="molecule type" value="Genomic_DNA"/>
</dbReference>
<dbReference type="EMBL" id="BC016055">
    <property type="protein sequence ID" value="AAH16055.1"/>
    <property type="molecule type" value="mRNA"/>
</dbReference>
<dbReference type="EMBL" id="BC028125">
    <property type="protein sequence ID" value="AAH28125.1"/>
    <property type="molecule type" value="mRNA"/>
</dbReference>
<dbReference type="EMBL" id="BC070133">
    <property type="protein sequence ID" value="AAH70133.1"/>
    <property type="molecule type" value="mRNA"/>
</dbReference>
<dbReference type="EMBL" id="AL389949">
    <property type="protein sequence ID" value="CAB97527.1"/>
    <property type="molecule type" value="mRNA"/>
</dbReference>
<dbReference type="EMBL" id="AL389950">
    <property type="protein sequence ID" value="CAB97528.1"/>
    <property type="molecule type" value="mRNA"/>
</dbReference>
<dbReference type="CCDS" id="CCDS14062.1">
    <molecule id="Q9UKX7-1"/>
</dbReference>
<dbReference type="CCDS" id="CCDS14063.1">
    <molecule id="Q9UKX7-2"/>
</dbReference>
<dbReference type="RefSeq" id="NP_009103.2">
    <molecule id="Q9UKX7-1"/>
    <property type="nucleotide sequence ID" value="NM_007172.3"/>
</dbReference>
<dbReference type="RefSeq" id="NP_705931.1">
    <molecule id="Q9UKX7-2"/>
    <property type="nucleotide sequence ID" value="NM_153645.2"/>
</dbReference>
<dbReference type="RefSeq" id="XP_005261369.1">
    <property type="nucleotide sequence ID" value="XM_005261312.1"/>
</dbReference>
<dbReference type="RefSeq" id="XP_005261371.1">
    <property type="nucleotide sequence ID" value="XM_005261314.1"/>
</dbReference>
<dbReference type="RefSeq" id="XP_006724166.1">
    <molecule id="Q9UKX7-1"/>
    <property type="nucleotide sequence ID" value="XM_006724103.2"/>
</dbReference>
<dbReference type="RefSeq" id="XP_006724167.1">
    <property type="nucleotide sequence ID" value="XM_006724104.1"/>
</dbReference>
<dbReference type="RefSeq" id="XP_011528135.1">
    <molecule id="Q9UKX7-1"/>
    <property type="nucleotide sequence ID" value="XM_011529833.2"/>
</dbReference>
<dbReference type="RefSeq" id="XP_016884026.1">
    <property type="nucleotide sequence ID" value="XM_017028537.1"/>
</dbReference>
<dbReference type="RefSeq" id="XP_024307914.1">
    <molecule id="Q9UKX7-1"/>
    <property type="nucleotide sequence ID" value="XM_024452146.2"/>
</dbReference>
<dbReference type="RefSeq" id="XP_047297027.1">
    <molecule id="Q9UKX7-2"/>
    <property type="nucleotide sequence ID" value="XM_047441071.1"/>
</dbReference>
<dbReference type="RefSeq" id="XP_047297028.1">
    <molecule id="Q9UKX7-2"/>
    <property type="nucleotide sequence ID" value="XM_047441072.1"/>
</dbReference>
<dbReference type="RefSeq" id="XP_054180961.1">
    <molecule id="Q9UKX7-1"/>
    <property type="nucleotide sequence ID" value="XM_054324986.1"/>
</dbReference>
<dbReference type="RefSeq" id="XP_054180962.1">
    <molecule id="Q9UKX7-1"/>
    <property type="nucleotide sequence ID" value="XM_054324987.1"/>
</dbReference>
<dbReference type="RefSeq" id="XP_054180963.1">
    <molecule id="Q9UKX7-1"/>
    <property type="nucleotide sequence ID" value="XM_054324988.1"/>
</dbReference>
<dbReference type="RefSeq" id="XP_054180964.1">
    <molecule id="Q9UKX7-2"/>
    <property type="nucleotide sequence ID" value="XM_054324989.1"/>
</dbReference>
<dbReference type="RefSeq" id="XP_054180965.1">
    <molecule id="Q9UKX7-2"/>
    <property type="nucleotide sequence ID" value="XM_054324990.1"/>
</dbReference>
<dbReference type="PDB" id="2EC1">
    <property type="method" value="NMR"/>
    <property type="chains" value="A=351-468"/>
</dbReference>
<dbReference type="PDB" id="3TJ3">
    <property type="method" value="X-ray"/>
    <property type="resolution" value="2.70 A"/>
    <property type="chains" value="C/D=1-109"/>
</dbReference>
<dbReference type="PDB" id="7MO0">
    <property type="method" value="X-ray"/>
    <property type="resolution" value="2.45 A"/>
    <property type="chains" value="B/D=337-468"/>
</dbReference>
<dbReference type="PDBsum" id="2EC1"/>
<dbReference type="PDBsum" id="3TJ3"/>
<dbReference type="PDBsum" id="7MO0"/>
<dbReference type="SMR" id="Q9UKX7"/>
<dbReference type="BioGRID" id="115982">
    <property type="interactions" value="348"/>
</dbReference>
<dbReference type="ComplexPortal" id="CPX-873">
    <property type="entry name" value="Nuclear pore complex"/>
</dbReference>
<dbReference type="CORUM" id="Q9UKX7"/>
<dbReference type="FunCoup" id="Q9UKX7">
    <property type="interactions" value="3008"/>
</dbReference>
<dbReference type="IntAct" id="Q9UKX7">
    <property type="interactions" value="115"/>
</dbReference>
<dbReference type="MINT" id="Q9UKX7"/>
<dbReference type="STRING" id="9606.ENSP00000345895"/>
<dbReference type="TCDB" id="1.I.1.1.3">
    <property type="family name" value="the nuclear pore complex (npc) family"/>
</dbReference>
<dbReference type="GlyCosmos" id="Q9UKX7">
    <property type="glycosylation" value="1 site, 1 glycan"/>
</dbReference>
<dbReference type="GlyGen" id="Q9UKX7">
    <property type="glycosylation" value="4 sites, 1 N-linked glycan (1 site), 1 O-linked glycan (3 sites)"/>
</dbReference>
<dbReference type="iPTMnet" id="Q9UKX7"/>
<dbReference type="PhosphoSitePlus" id="Q9UKX7"/>
<dbReference type="SwissPalm" id="Q9UKX7"/>
<dbReference type="BioMuta" id="NUP50"/>
<dbReference type="DMDM" id="20455193"/>
<dbReference type="jPOST" id="Q9UKX7"/>
<dbReference type="MassIVE" id="Q9UKX7"/>
<dbReference type="PaxDb" id="9606-ENSP00000345895"/>
<dbReference type="PeptideAtlas" id="Q9UKX7"/>
<dbReference type="ProteomicsDB" id="84906">
    <molecule id="Q9UKX7-1"/>
</dbReference>
<dbReference type="ProteomicsDB" id="84907">
    <molecule id="Q9UKX7-2"/>
</dbReference>
<dbReference type="Pumba" id="Q9UKX7"/>
<dbReference type="Antibodypedia" id="27795">
    <property type="antibodies" value="370 antibodies from 32 providers"/>
</dbReference>
<dbReference type="DNASU" id="10762"/>
<dbReference type="Ensembl" id="ENST00000347635.9">
    <molecule id="Q9UKX7-1"/>
    <property type="protein sequence ID" value="ENSP00000345895.3"/>
    <property type="gene ID" value="ENSG00000093000.19"/>
</dbReference>
<dbReference type="Ensembl" id="ENST00000396096.6">
    <molecule id="Q9UKX7-2"/>
    <property type="protein sequence ID" value="ENSP00000379403.2"/>
    <property type="gene ID" value="ENSG00000093000.19"/>
</dbReference>
<dbReference type="Ensembl" id="ENST00000407019.6">
    <molecule id="Q9UKX7-2"/>
    <property type="protein sequence ID" value="ENSP00000385555.2"/>
    <property type="gene ID" value="ENSG00000093000.19"/>
</dbReference>
<dbReference type="GeneID" id="10762"/>
<dbReference type="KEGG" id="hsa:10762"/>
<dbReference type="MANE-Select" id="ENST00000347635.9">
    <property type="protein sequence ID" value="ENSP00000345895.3"/>
    <property type="RefSeq nucleotide sequence ID" value="NM_007172.4"/>
    <property type="RefSeq protein sequence ID" value="NP_009103.2"/>
</dbReference>
<dbReference type="UCSC" id="uc003bfr.4">
    <molecule id="Q9UKX7-1"/>
    <property type="organism name" value="human"/>
</dbReference>
<dbReference type="AGR" id="HGNC:8065"/>
<dbReference type="CTD" id="10762"/>
<dbReference type="DisGeNET" id="10762"/>
<dbReference type="GeneCards" id="NUP50"/>
<dbReference type="HGNC" id="HGNC:8065">
    <property type="gene designation" value="NUP50"/>
</dbReference>
<dbReference type="HPA" id="ENSG00000093000">
    <property type="expression patterns" value="Low tissue specificity"/>
</dbReference>
<dbReference type="MIM" id="604646">
    <property type="type" value="gene"/>
</dbReference>
<dbReference type="neXtProt" id="NX_Q9UKX7"/>
<dbReference type="OpenTargets" id="ENSG00000093000"/>
<dbReference type="PharmGKB" id="PA31852"/>
<dbReference type="VEuPathDB" id="HostDB:ENSG00000093000"/>
<dbReference type="eggNOG" id="KOG2724">
    <property type="taxonomic scope" value="Eukaryota"/>
</dbReference>
<dbReference type="GeneTree" id="ENSGT00440000035348"/>
<dbReference type="HOGENOM" id="CLU_032593_0_0_1"/>
<dbReference type="InParanoid" id="Q9UKX7"/>
<dbReference type="OMA" id="CDWVWEQ"/>
<dbReference type="OrthoDB" id="10062131at2759"/>
<dbReference type="PAN-GO" id="Q9UKX7">
    <property type="GO annotations" value="1 GO annotation based on evolutionary models"/>
</dbReference>
<dbReference type="PhylomeDB" id="Q9UKX7"/>
<dbReference type="TreeFam" id="TF106504"/>
<dbReference type="PathwayCommons" id="Q9UKX7"/>
<dbReference type="Reactome" id="R-HSA-1169408">
    <property type="pathway name" value="ISG15 antiviral mechanism"/>
</dbReference>
<dbReference type="Reactome" id="R-HSA-159227">
    <property type="pathway name" value="Transport of the SLBP independent Mature mRNA"/>
</dbReference>
<dbReference type="Reactome" id="R-HSA-159230">
    <property type="pathway name" value="Transport of the SLBP Dependant Mature mRNA"/>
</dbReference>
<dbReference type="Reactome" id="R-HSA-159231">
    <property type="pathway name" value="Transport of Mature mRNA Derived from an Intronless Transcript"/>
</dbReference>
<dbReference type="Reactome" id="R-HSA-159236">
    <property type="pathway name" value="Transport of Mature mRNA derived from an Intron-Containing Transcript"/>
</dbReference>
<dbReference type="Reactome" id="R-HSA-165054">
    <property type="pathway name" value="Rev-mediated nuclear export of HIV RNA"/>
</dbReference>
<dbReference type="Reactome" id="R-HSA-168271">
    <property type="pathway name" value="Transport of Ribonucleoproteins into the Host Nucleus"/>
</dbReference>
<dbReference type="Reactome" id="R-HSA-168276">
    <property type="pathway name" value="NS1 Mediated Effects on Host Pathways"/>
</dbReference>
<dbReference type="Reactome" id="R-HSA-168325">
    <property type="pathway name" value="Viral Messenger RNA Synthesis"/>
</dbReference>
<dbReference type="Reactome" id="R-HSA-168333">
    <property type="pathway name" value="NEP/NS2 Interacts with the Cellular Export Machinery"/>
</dbReference>
<dbReference type="Reactome" id="R-HSA-170822">
    <property type="pathway name" value="Regulation of Glucokinase by Glucokinase Regulatory Protein"/>
</dbReference>
<dbReference type="Reactome" id="R-HSA-180746">
    <property type="pathway name" value="Nuclear import of Rev protein"/>
</dbReference>
<dbReference type="Reactome" id="R-HSA-180910">
    <property type="pathway name" value="Vpr-mediated nuclear import of PICs"/>
</dbReference>
<dbReference type="Reactome" id="R-HSA-191859">
    <property type="pathway name" value="snRNP Assembly"/>
</dbReference>
<dbReference type="Reactome" id="R-HSA-3108214">
    <property type="pathway name" value="SUMOylation of DNA damage response and repair proteins"/>
</dbReference>
<dbReference type="Reactome" id="R-HSA-3232142">
    <property type="pathway name" value="SUMOylation of ubiquitinylation proteins"/>
</dbReference>
<dbReference type="Reactome" id="R-HSA-3301854">
    <property type="pathway name" value="Nuclear Pore Complex (NPC) Disassembly"/>
</dbReference>
<dbReference type="Reactome" id="R-HSA-3371453">
    <property type="pathway name" value="Regulation of HSF1-mediated heat shock response"/>
</dbReference>
<dbReference type="Reactome" id="R-HSA-4085377">
    <property type="pathway name" value="SUMOylation of SUMOylation proteins"/>
</dbReference>
<dbReference type="Reactome" id="R-HSA-4551638">
    <property type="pathway name" value="SUMOylation of chromatin organization proteins"/>
</dbReference>
<dbReference type="Reactome" id="R-HSA-4570464">
    <property type="pathway name" value="SUMOylation of RNA binding proteins"/>
</dbReference>
<dbReference type="Reactome" id="R-HSA-4615885">
    <property type="pathway name" value="SUMOylation of DNA replication proteins"/>
</dbReference>
<dbReference type="Reactome" id="R-HSA-5578749">
    <property type="pathway name" value="Transcriptional regulation by small RNAs"/>
</dbReference>
<dbReference type="Reactome" id="R-HSA-5619107">
    <property type="pathway name" value="Defective TPR may confer susceptibility towards thyroid papillary carcinoma (TPC)"/>
</dbReference>
<dbReference type="Reactome" id="R-HSA-6784531">
    <property type="pathway name" value="tRNA processing in the nucleus"/>
</dbReference>
<dbReference type="Reactome" id="R-HSA-9609690">
    <property type="pathway name" value="HCMV Early Events"/>
</dbReference>
<dbReference type="Reactome" id="R-HSA-9610379">
    <property type="pathway name" value="HCMV Late Events"/>
</dbReference>
<dbReference type="Reactome" id="R-HSA-9705671">
    <property type="pathway name" value="SARS-CoV-2 activates/modulates innate and adaptive immune responses"/>
</dbReference>
<dbReference type="SignaLink" id="Q9UKX7"/>
<dbReference type="SIGNOR" id="Q9UKX7"/>
<dbReference type="BioGRID-ORCS" id="10762">
    <property type="hits" value="318 hits in 1132 CRISPR screens"/>
</dbReference>
<dbReference type="CD-CODE" id="D6A53B8E">
    <property type="entry name" value="Nuclear pore complex"/>
</dbReference>
<dbReference type="CD-CODE" id="DEE660B4">
    <property type="entry name" value="Stress granule"/>
</dbReference>
<dbReference type="ChiTaRS" id="NUP50">
    <property type="organism name" value="human"/>
</dbReference>
<dbReference type="EvolutionaryTrace" id="Q9UKX7"/>
<dbReference type="GeneWiki" id="NUP50"/>
<dbReference type="GenomeRNAi" id="10762"/>
<dbReference type="Pharos" id="Q9UKX7">
    <property type="development level" value="Tbio"/>
</dbReference>
<dbReference type="PRO" id="PR:Q9UKX7"/>
<dbReference type="Proteomes" id="UP000005640">
    <property type="component" value="Chromosome 22"/>
</dbReference>
<dbReference type="RNAct" id="Q9UKX7">
    <property type="molecule type" value="protein"/>
</dbReference>
<dbReference type="Bgee" id="ENSG00000093000">
    <property type="expression patterns" value="Expressed in epithelium of nasopharynx and 213 other cell types or tissues"/>
</dbReference>
<dbReference type="ExpressionAtlas" id="Q9UKX7">
    <property type="expression patterns" value="baseline and differential"/>
</dbReference>
<dbReference type="GO" id="GO:0005635">
    <property type="term" value="C:nuclear envelope"/>
    <property type="evidence" value="ECO:0000314"/>
    <property type="project" value="ComplexPortal"/>
</dbReference>
<dbReference type="GO" id="GO:0031965">
    <property type="term" value="C:nuclear membrane"/>
    <property type="evidence" value="ECO:0000314"/>
    <property type="project" value="HPA"/>
</dbReference>
<dbReference type="GO" id="GO:0005643">
    <property type="term" value="C:nuclear pore"/>
    <property type="evidence" value="ECO:0000304"/>
    <property type="project" value="ProtInc"/>
</dbReference>
<dbReference type="GO" id="GO:0005654">
    <property type="term" value="C:nucleoplasm"/>
    <property type="evidence" value="ECO:0000314"/>
    <property type="project" value="HPA"/>
</dbReference>
<dbReference type="GO" id="GO:0051028">
    <property type="term" value="P:mRNA transport"/>
    <property type="evidence" value="ECO:0007669"/>
    <property type="project" value="UniProtKB-KW"/>
</dbReference>
<dbReference type="GO" id="GO:0001841">
    <property type="term" value="P:neural tube formation"/>
    <property type="evidence" value="ECO:0007669"/>
    <property type="project" value="Ensembl"/>
</dbReference>
<dbReference type="GO" id="GO:0006913">
    <property type="term" value="P:nucleocytoplasmic transport"/>
    <property type="evidence" value="ECO:0000303"/>
    <property type="project" value="ComplexPortal"/>
</dbReference>
<dbReference type="GO" id="GO:0006606">
    <property type="term" value="P:protein import into nucleus"/>
    <property type="evidence" value="ECO:0000318"/>
    <property type="project" value="GO_Central"/>
</dbReference>
<dbReference type="CDD" id="cd13170">
    <property type="entry name" value="RanBD_NUP50"/>
    <property type="match status" value="1"/>
</dbReference>
<dbReference type="DisProt" id="DP02455"/>
<dbReference type="FunFam" id="2.30.29.30:FF:000179">
    <property type="entry name" value="Nuclear pore complex protein Nup50"/>
    <property type="match status" value="1"/>
</dbReference>
<dbReference type="Gene3D" id="2.30.29.30">
    <property type="entry name" value="Pleckstrin-homology domain (PH domain)/Phosphotyrosine-binding domain (PTB)"/>
    <property type="match status" value="1"/>
</dbReference>
<dbReference type="InterPro" id="IPR015007">
    <property type="entry name" value="NUP2/50/61"/>
</dbReference>
<dbReference type="InterPro" id="IPR011993">
    <property type="entry name" value="PH-like_dom_sf"/>
</dbReference>
<dbReference type="InterPro" id="IPR000156">
    <property type="entry name" value="Ran_bind_dom"/>
</dbReference>
<dbReference type="InterPro" id="IPR045255">
    <property type="entry name" value="RanBP1-like"/>
</dbReference>
<dbReference type="PANTHER" id="PTHR23138:SF141">
    <property type="entry name" value="NUCLEAR PORE COMPLEX PROTEIN NUP50"/>
    <property type="match status" value="1"/>
</dbReference>
<dbReference type="PANTHER" id="PTHR23138">
    <property type="entry name" value="RAN BINDING PROTEIN"/>
    <property type="match status" value="1"/>
</dbReference>
<dbReference type="Pfam" id="PF08911">
    <property type="entry name" value="NUP50"/>
    <property type="match status" value="1"/>
</dbReference>
<dbReference type="Pfam" id="PF00638">
    <property type="entry name" value="Ran_BP1"/>
    <property type="match status" value="1"/>
</dbReference>
<dbReference type="SMART" id="SM00160">
    <property type="entry name" value="RanBD"/>
    <property type="match status" value="1"/>
</dbReference>
<dbReference type="SUPFAM" id="SSF50729">
    <property type="entry name" value="PH domain-like"/>
    <property type="match status" value="1"/>
</dbReference>
<dbReference type="PROSITE" id="PS50196">
    <property type="entry name" value="RANBD1"/>
    <property type="match status" value="1"/>
</dbReference>
<proteinExistence type="evidence at protein level"/>
<organism>
    <name type="scientific">Homo sapiens</name>
    <name type="common">Human</name>
    <dbReference type="NCBI Taxonomy" id="9606"/>
    <lineage>
        <taxon>Eukaryota</taxon>
        <taxon>Metazoa</taxon>
        <taxon>Chordata</taxon>
        <taxon>Craniata</taxon>
        <taxon>Vertebrata</taxon>
        <taxon>Euteleostomi</taxon>
        <taxon>Mammalia</taxon>
        <taxon>Eutheria</taxon>
        <taxon>Euarchontoglires</taxon>
        <taxon>Primates</taxon>
        <taxon>Haplorrhini</taxon>
        <taxon>Catarrhini</taxon>
        <taxon>Hominidae</taxon>
        <taxon>Homo</taxon>
    </lineage>
</organism>
<feature type="chain" id="PRO_0000204868" description="Nuclear pore complex protein Nup50">
    <location>
        <begin position="1"/>
        <end position="468"/>
    </location>
</feature>
<feature type="repeat" description="1">
    <location>
        <begin position="76"/>
        <end position="77"/>
    </location>
</feature>
<feature type="repeat" description="2">
    <location>
        <begin position="113"/>
        <end position="114"/>
    </location>
</feature>
<feature type="repeat" description="3">
    <location>
        <begin position="225"/>
        <end position="226"/>
    </location>
</feature>
<feature type="repeat" description="4">
    <location>
        <begin position="273"/>
        <end position="274"/>
    </location>
</feature>
<feature type="repeat" description="5">
    <location>
        <begin position="303"/>
        <end position="304"/>
    </location>
</feature>
<feature type="domain" description="RanBD1" evidence="4">
    <location>
        <begin position="335"/>
        <end position="468"/>
    </location>
</feature>
<feature type="region of interest" description="Disordered" evidence="5">
    <location>
        <begin position="1"/>
        <end position="26"/>
    </location>
</feature>
<feature type="region of interest" description="5 X 2 AA repeats of F-G">
    <location>
        <begin position="76"/>
        <end position="304"/>
    </location>
</feature>
<feature type="region of interest" description="Disordered" evidence="5">
    <location>
        <begin position="122"/>
        <end position="148"/>
    </location>
</feature>
<feature type="region of interest" description="Binding to CDKN1B" evidence="1">
    <location>
        <begin position="144"/>
        <end position="206"/>
    </location>
</feature>
<feature type="region of interest" description="Disordered" evidence="5">
    <location>
        <begin position="201"/>
        <end position="224"/>
    </location>
</feature>
<feature type="region of interest" description="Disordered" evidence="5">
    <location>
        <begin position="238"/>
        <end position="269"/>
    </location>
</feature>
<feature type="region of interest" description="Disordered" evidence="5">
    <location>
        <begin position="304"/>
        <end position="345"/>
    </location>
</feature>
<feature type="compositionally biased region" description="Basic and acidic residues" evidence="5">
    <location>
        <begin position="1"/>
        <end position="16"/>
    </location>
</feature>
<feature type="compositionally biased region" description="Low complexity" evidence="5">
    <location>
        <begin position="137"/>
        <end position="148"/>
    </location>
</feature>
<feature type="compositionally biased region" description="Basic and acidic residues" evidence="5">
    <location>
        <begin position="241"/>
        <end position="260"/>
    </location>
</feature>
<feature type="compositionally biased region" description="Polar residues" evidence="5">
    <location>
        <begin position="304"/>
        <end position="317"/>
    </location>
</feature>
<feature type="modified residue" description="N6-acetyllysine" evidence="3">
    <location>
        <position position="8"/>
    </location>
</feature>
<feature type="modified residue" description="Phosphoserine" evidence="17">
    <location>
        <position position="52"/>
    </location>
</feature>
<feature type="modified residue" description="N6-acetyllysine" evidence="12">
    <location>
        <position position="83"/>
    </location>
</feature>
<feature type="modified residue" description="N6-acetyllysine" evidence="3">
    <location>
        <position position="127"/>
    </location>
</feature>
<feature type="modified residue" description="Phosphoserine" evidence="17">
    <location>
        <position position="208"/>
    </location>
</feature>
<feature type="modified residue" description="Phosphoserine" evidence="10 11 13 14 15 17">
    <location>
        <position position="221"/>
    </location>
</feature>
<feature type="modified residue" description="Phosphoserine" evidence="3">
    <location>
        <position position="234"/>
    </location>
</feature>
<feature type="modified residue" description="Phosphothreonine" evidence="14">
    <location>
        <position position="246"/>
    </location>
</feature>
<feature type="modified residue" description="Phosphothreonine" evidence="14">
    <location>
        <position position="259"/>
    </location>
</feature>
<feature type="modified residue" description="Phosphoserine" evidence="17">
    <location>
        <position position="270"/>
    </location>
</feature>
<feature type="modified residue" description="Phosphoserine" evidence="14">
    <location>
        <position position="296"/>
    </location>
</feature>
<feature type="modified residue" description="N6-acetyllysine" evidence="3">
    <location>
        <position position="450"/>
    </location>
</feature>
<feature type="cross-link" description="Glycyl lysine isopeptide (Lys-Gly) (interchain with G-Cter in SUMO2)" evidence="18">
    <location>
        <position position="353"/>
    </location>
</feature>
<feature type="splice variant" id="VSP_040633" description="In isoform 2." evidence="8">
    <location>
        <begin position="1"/>
        <end position="28"/>
    </location>
</feature>
<feature type="sequence conflict" description="In Ref. 1; AAD53401." evidence="9" ref="1">
    <original>T</original>
    <variation>S</variation>
    <location>
        <position position="235"/>
    </location>
</feature>
<feature type="turn" evidence="19">
    <location>
        <begin position="12"/>
        <end position="14"/>
    </location>
</feature>
<feature type="strand" evidence="19">
    <location>
        <begin position="15"/>
        <end position="17"/>
    </location>
</feature>
<feature type="helix" evidence="19">
    <location>
        <begin position="32"/>
        <end position="37"/>
    </location>
</feature>
<feature type="strand" evidence="20">
    <location>
        <begin position="358"/>
        <end position="369"/>
    </location>
</feature>
<feature type="strand" evidence="20">
    <location>
        <begin position="372"/>
        <end position="385"/>
    </location>
</feature>
<feature type="strand" evidence="20">
    <location>
        <begin position="387"/>
        <end position="389"/>
    </location>
</feature>
<feature type="strand" evidence="20">
    <location>
        <begin position="391"/>
        <end position="399"/>
    </location>
</feature>
<feature type="strand" evidence="20">
    <location>
        <begin position="404"/>
        <end position="409"/>
    </location>
</feature>
<feature type="strand" evidence="20">
    <location>
        <begin position="416"/>
        <end position="419"/>
    </location>
</feature>
<feature type="turn" evidence="20">
    <location>
        <begin position="420"/>
        <end position="422"/>
    </location>
</feature>
<feature type="strand" evidence="20">
    <location>
        <begin position="423"/>
        <end position="428"/>
    </location>
</feature>
<feature type="strand" evidence="20">
    <location>
        <begin position="434"/>
        <end position="436"/>
    </location>
</feature>
<feature type="turn" evidence="20">
    <location>
        <begin position="437"/>
        <end position="440"/>
    </location>
</feature>
<feature type="strand" evidence="20">
    <location>
        <begin position="443"/>
        <end position="448"/>
    </location>
</feature>
<feature type="helix" evidence="20">
    <location>
        <begin position="452"/>
        <end position="467"/>
    </location>
</feature>
<feature type="initiator methionine" description="Removed" evidence="16">
    <location sequence="Q9UKX7-2">
        <position position="1"/>
    </location>
</feature>
<feature type="modified residue" description="N-acetylalanine" evidence="16">
    <location sequence="Q9UKX7-2">
        <position position="2"/>
    </location>
</feature>
<accession>Q9UKX7</accession>
<accession>B1AHA4</accession>
<accession>B2RB15</accession>
<accession>O75644</accession>
<accession>Q8N6V5</accession>
<accession>Q9NPM9</accession>
<accession>Q9NPR6</accession>
<accession>Q9P1K5</accession>
<name>NUP50_HUMAN</name>
<sequence>MAKRNAEKELTDRNWDQEDEAEEVGTFSMASEEVLKNRAIKKAKRRNVGFESDTGGAFKGFKGLVVPSGGGRFSGFGSGAGGKPLEGLSNGNNITSAPPFASAKAAADPKVAFGSLAANGPTTLVDKVSNPKTNGDSQQPSSSGLASSKACVGNAYHKQLAALNCSVRDWIVKHVNTNPLCDLTPIFKDYEKYLANIEQQHGNSGRNSESESNKVAAETQSPSLFGSTKLQQESTFLFHGNKTEDTPDKKMEVASEKKTDPSSLGATSASFNFGKKVDSSVLGSLSSVPLTGFSFSPGNSSLFGKDTTQSKPVSSPFPTKPLEGQAEGDSGECKGGDEEENDEPPKVVVTEVKEEDAFYSKKCKLFYKKDNEFKEKGIGTLHLKPTANQKTQLLVRADTNLGNILLNVLIPPNMPCTRTGKNNVLIVCVPNPPIDEKNATMPVTMLIRVKTSEDADELHKILLEKKDA</sequence>